<accession>P53468</accession>
<organism>
    <name type="scientific">Oxytricha trifallax</name>
    <name type="common">Sterkiella histriomuscorum</name>
    <dbReference type="NCBI Taxonomy" id="94289"/>
    <lineage>
        <taxon>Eukaryota</taxon>
        <taxon>Sar</taxon>
        <taxon>Alveolata</taxon>
        <taxon>Ciliophora</taxon>
        <taxon>Intramacronucleata</taxon>
        <taxon>Spirotrichea</taxon>
        <taxon>Stichotrichia</taxon>
        <taxon>Sporadotrichida</taxon>
        <taxon>Oxytrichidae</taxon>
        <taxon>Stylonychinae</taxon>
        <taxon>Sterkiella</taxon>
    </lineage>
</organism>
<evidence type="ECO:0000250" key="1">
    <source>
        <dbReference type="UniProtKB" id="P68137"/>
    </source>
</evidence>
<evidence type="ECO:0000305" key="2"/>
<feature type="chain" id="PRO_0000088978" description="Actin, cytoplasmic">
    <location>
        <begin position="1"/>
        <end position="375"/>
    </location>
</feature>
<sequence length="375" mass="42051">MSDQQTCVIDNGSGVVKAGFAGEDAPRAVFPSIVGRPKNVSALIGVDSASEYLGDEAQQKRGVLKIFYPIEHGIVKDWDDMEKIWNHTFYVELRVQPDEHPILLTEAPLNPKTNREKMTQIMFETFNVPALYVAIQAVLSLYSAGRTTGIVCDAGDGVTHTVPIYEGFSIPHAVSRIQLAGRDLTTFLAKLLTERGYNFTSSAELEIVRDIKEKLCFVALDYESALKQSHDSSQFEKNYELPDGKVITIGSERFRCPEYLFKPLEMNGRELDSIQDLTYKSIQECDVDVRRDLYQNIILSGGTTMYEGIGERLLKEIENRAPKSINVKVIASPDRRFAVWRGGSTLTSLSTFASMWITKEDYDENGASIVHRKCI</sequence>
<keyword id="KW-0067">ATP-binding</keyword>
<keyword id="KW-0963">Cytoplasm</keyword>
<keyword id="KW-0206">Cytoskeleton</keyword>
<keyword id="KW-0378">Hydrolase</keyword>
<keyword id="KW-0547">Nucleotide-binding</keyword>
<name>ACT1_OXYTR</name>
<reference key="1">
    <citation type="journal article" date="1995" name="Proc. Natl. Acad. Sci. U.S.A.">
        <title>Scrambling of the actin I gene in two Oxytricha species.</title>
        <authorList>
            <person name="Dubois M."/>
            <person name="Prescott D.M."/>
        </authorList>
    </citation>
    <scope>NUCLEOTIDE SEQUENCE [GENOMIC DNA]</scope>
    <source>
        <strain>WR</strain>
    </source>
</reference>
<comment type="function">
    <text>Actins are highly conserved proteins that are involved in various types of cell motility and are ubiquitously expressed in all eukaryotic cells.</text>
</comment>
<comment type="catalytic activity">
    <reaction evidence="1">
        <text>ATP + H2O = ADP + phosphate + H(+)</text>
        <dbReference type="Rhea" id="RHEA:13065"/>
        <dbReference type="ChEBI" id="CHEBI:15377"/>
        <dbReference type="ChEBI" id="CHEBI:15378"/>
        <dbReference type="ChEBI" id="CHEBI:30616"/>
        <dbReference type="ChEBI" id="CHEBI:43474"/>
        <dbReference type="ChEBI" id="CHEBI:456216"/>
    </reaction>
</comment>
<comment type="subcellular location">
    <subcellularLocation>
        <location>Cytoplasm</location>
        <location>Cytoskeleton</location>
    </subcellularLocation>
</comment>
<comment type="similarity">
    <text evidence="2">Belongs to the actin family.</text>
</comment>
<dbReference type="EC" id="3.6.4.-" evidence="1"/>
<dbReference type="EMBL" id="U18940">
    <property type="protein sequence ID" value="AAA85836.1"/>
    <property type="molecule type" value="Genomic_DNA"/>
</dbReference>
<dbReference type="SMR" id="P53468"/>
<dbReference type="GO" id="GO:0005737">
    <property type="term" value="C:cytoplasm"/>
    <property type="evidence" value="ECO:0007669"/>
    <property type="project" value="UniProtKB-KW"/>
</dbReference>
<dbReference type="GO" id="GO:0005856">
    <property type="term" value="C:cytoskeleton"/>
    <property type="evidence" value="ECO:0007669"/>
    <property type="project" value="UniProtKB-SubCell"/>
</dbReference>
<dbReference type="GO" id="GO:0005524">
    <property type="term" value="F:ATP binding"/>
    <property type="evidence" value="ECO:0007669"/>
    <property type="project" value="UniProtKB-KW"/>
</dbReference>
<dbReference type="GO" id="GO:0016787">
    <property type="term" value="F:hydrolase activity"/>
    <property type="evidence" value="ECO:0007669"/>
    <property type="project" value="UniProtKB-KW"/>
</dbReference>
<dbReference type="FunFam" id="3.30.420.40:FF:000291">
    <property type="entry name" value="Actin, alpha skeletal muscle"/>
    <property type="match status" value="1"/>
</dbReference>
<dbReference type="FunFam" id="3.90.640.10:FF:000047">
    <property type="entry name" value="Actin, alpha skeletal muscle"/>
    <property type="match status" value="1"/>
</dbReference>
<dbReference type="FunFam" id="3.30.420.40:FF:000058">
    <property type="entry name" value="Putative actin-related protein 5"/>
    <property type="match status" value="1"/>
</dbReference>
<dbReference type="Gene3D" id="3.30.420.40">
    <property type="match status" value="2"/>
</dbReference>
<dbReference type="Gene3D" id="3.90.640.10">
    <property type="entry name" value="Actin, Chain A, domain 4"/>
    <property type="match status" value="1"/>
</dbReference>
<dbReference type="InterPro" id="IPR004000">
    <property type="entry name" value="Actin"/>
</dbReference>
<dbReference type="InterPro" id="IPR020902">
    <property type="entry name" value="Actin/actin-like_CS"/>
</dbReference>
<dbReference type="InterPro" id="IPR004001">
    <property type="entry name" value="Actin_CS"/>
</dbReference>
<dbReference type="InterPro" id="IPR043129">
    <property type="entry name" value="ATPase_NBD"/>
</dbReference>
<dbReference type="PANTHER" id="PTHR11937">
    <property type="entry name" value="ACTIN"/>
    <property type="match status" value="1"/>
</dbReference>
<dbReference type="Pfam" id="PF00022">
    <property type="entry name" value="Actin"/>
    <property type="match status" value="1"/>
</dbReference>
<dbReference type="PRINTS" id="PR00190">
    <property type="entry name" value="ACTIN"/>
</dbReference>
<dbReference type="SMART" id="SM00268">
    <property type="entry name" value="ACTIN"/>
    <property type="match status" value="1"/>
</dbReference>
<dbReference type="SUPFAM" id="SSF53067">
    <property type="entry name" value="Actin-like ATPase domain"/>
    <property type="match status" value="2"/>
</dbReference>
<dbReference type="PROSITE" id="PS00406">
    <property type="entry name" value="ACTINS_1"/>
    <property type="match status" value="1"/>
</dbReference>
<dbReference type="PROSITE" id="PS00432">
    <property type="entry name" value="ACTINS_2"/>
    <property type="match status" value="1"/>
</dbReference>
<dbReference type="PROSITE" id="PS01132">
    <property type="entry name" value="ACTINS_ACT_LIKE"/>
    <property type="match status" value="1"/>
</dbReference>
<protein>
    <recommendedName>
        <fullName>Actin, cytoplasmic</fullName>
        <ecNumber evidence="1">3.6.4.-</ecNumber>
    </recommendedName>
    <alternativeName>
        <fullName>Actin, macronuclear</fullName>
    </alternativeName>
</protein>
<proteinExistence type="inferred from homology"/>